<accession>B4TYZ1</accession>
<organism>
    <name type="scientific">Salmonella schwarzengrund (strain CVM19633)</name>
    <dbReference type="NCBI Taxonomy" id="439843"/>
    <lineage>
        <taxon>Bacteria</taxon>
        <taxon>Pseudomonadati</taxon>
        <taxon>Pseudomonadota</taxon>
        <taxon>Gammaproteobacteria</taxon>
        <taxon>Enterobacterales</taxon>
        <taxon>Enterobacteriaceae</taxon>
        <taxon>Salmonella</taxon>
    </lineage>
</organism>
<keyword id="KW-0963">Cytoplasm</keyword>
<keyword id="KW-0489">Methyltransferase</keyword>
<keyword id="KW-0698">rRNA processing</keyword>
<keyword id="KW-0949">S-adenosyl-L-methionine</keyword>
<keyword id="KW-0808">Transferase</keyword>
<evidence type="ECO:0000255" key="1">
    <source>
        <dbReference type="HAMAP-Rule" id="MF_01523"/>
    </source>
</evidence>
<proteinExistence type="inferred from homology"/>
<reference key="1">
    <citation type="journal article" date="2011" name="J. Bacteriol.">
        <title>Comparative genomics of 28 Salmonella enterica isolates: evidence for CRISPR-mediated adaptive sublineage evolution.</title>
        <authorList>
            <person name="Fricke W.F."/>
            <person name="Mammel M.K."/>
            <person name="McDermott P.F."/>
            <person name="Tartera C."/>
            <person name="White D.G."/>
            <person name="Leclerc J.E."/>
            <person name="Ravel J."/>
            <person name="Cebula T.A."/>
        </authorList>
    </citation>
    <scope>NUCLEOTIDE SEQUENCE [LARGE SCALE GENOMIC DNA]</scope>
    <source>
        <strain>CVM19633</strain>
    </source>
</reference>
<dbReference type="EC" id="2.1.1.242" evidence="1"/>
<dbReference type="EMBL" id="CP001127">
    <property type="protein sequence ID" value="ACF92746.1"/>
    <property type="molecule type" value="Genomic_DNA"/>
</dbReference>
<dbReference type="RefSeq" id="WP_001165130.1">
    <property type="nucleotide sequence ID" value="NC_011094.1"/>
</dbReference>
<dbReference type="SMR" id="B4TYZ1"/>
<dbReference type="KEGG" id="sew:SeSA_A3786"/>
<dbReference type="HOGENOM" id="CLU_076324_0_0_6"/>
<dbReference type="Proteomes" id="UP000001865">
    <property type="component" value="Chromosome"/>
</dbReference>
<dbReference type="GO" id="GO:0005737">
    <property type="term" value="C:cytoplasm"/>
    <property type="evidence" value="ECO:0007669"/>
    <property type="project" value="UniProtKB-SubCell"/>
</dbReference>
<dbReference type="GO" id="GO:0008990">
    <property type="term" value="F:rRNA (guanine-N2-)-methyltransferase activity"/>
    <property type="evidence" value="ECO:0007669"/>
    <property type="project" value="UniProtKB-UniRule"/>
</dbReference>
<dbReference type="CDD" id="cd02440">
    <property type="entry name" value="AdoMet_MTases"/>
    <property type="match status" value="1"/>
</dbReference>
<dbReference type="FunFam" id="3.40.1630.10:FF:000001">
    <property type="entry name" value="Ribosomal RNA small subunit methyltransferase J"/>
    <property type="match status" value="1"/>
</dbReference>
<dbReference type="FunFam" id="3.40.50.150:FF:000072">
    <property type="entry name" value="Ribosomal RNA small subunit methyltransferase J"/>
    <property type="match status" value="1"/>
</dbReference>
<dbReference type="Gene3D" id="3.40.50.150">
    <property type="entry name" value="Vaccinia Virus protein VP39"/>
    <property type="match status" value="1"/>
</dbReference>
<dbReference type="Gene3D" id="3.40.1630.10">
    <property type="entry name" value="YhiQ-like domain"/>
    <property type="match status" value="1"/>
</dbReference>
<dbReference type="HAMAP" id="MF_01523">
    <property type="entry name" value="16SrRNA_methyltr_J"/>
    <property type="match status" value="1"/>
</dbReference>
<dbReference type="InterPro" id="IPR007536">
    <property type="entry name" value="16SrRNA_methylTrfase_J"/>
</dbReference>
<dbReference type="InterPro" id="IPR029063">
    <property type="entry name" value="SAM-dependent_MTases_sf"/>
</dbReference>
<dbReference type="NCBIfam" id="NF008012">
    <property type="entry name" value="PRK10742.1"/>
    <property type="match status" value="1"/>
</dbReference>
<dbReference type="PANTHER" id="PTHR36112">
    <property type="entry name" value="RIBOSOMAL RNA SMALL SUBUNIT METHYLTRANSFERASE J"/>
    <property type="match status" value="1"/>
</dbReference>
<dbReference type="PANTHER" id="PTHR36112:SF1">
    <property type="entry name" value="RIBOSOMAL RNA SMALL SUBUNIT METHYLTRANSFERASE J"/>
    <property type="match status" value="1"/>
</dbReference>
<dbReference type="Pfam" id="PF04445">
    <property type="entry name" value="SAM_MT"/>
    <property type="match status" value="1"/>
</dbReference>
<dbReference type="SUPFAM" id="SSF53335">
    <property type="entry name" value="S-adenosyl-L-methionine-dependent methyltransferases"/>
    <property type="match status" value="1"/>
</dbReference>
<gene>
    <name evidence="1" type="primary">rsmJ</name>
    <name type="synonym">yhiQ</name>
    <name type="ordered locus">SeSA_A3786</name>
</gene>
<name>RSMJ_SALSV</name>
<sequence length="252" mass="27322">MQICLMDETGATDGALSVLAARWGLEHDEDNPMALVLTPQHLELRKRDEPKLGGIFVDFVGGAMAHRRKFGGGRGEAVAKAVGIKGDYLPDVVDATAGLGRDAFVLASVGCRVRMLERNPVVAALLDDGLTRGYADADIGPWLQQRLQLIHASSLTALTDITPRPQVVYLDPMFPHRQKSALVKKEMRVFQSLVGPDLDADGLLEPARQLATKRVVVKRPDYAPPLADVATPNAIVTKGHRFDIYAGTPLTE</sequence>
<feature type="chain" id="PRO_1000198513" description="Ribosomal RNA small subunit methyltransferase J">
    <location>
        <begin position="1"/>
        <end position="252"/>
    </location>
</feature>
<feature type="binding site" evidence="1">
    <location>
        <begin position="101"/>
        <end position="102"/>
    </location>
    <ligand>
        <name>S-adenosyl-L-methionine</name>
        <dbReference type="ChEBI" id="CHEBI:59789"/>
    </ligand>
</feature>
<feature type="binding site" evidence="1">
    <location>
        <begin position="117"/>
        <end position="118"/>
    </location>
    <ligand>
        <name>S-adenosyl-L-methionine</name>
        <dbReference type="ChEBI" id="CHEBI:59789"/>
    </ligand>
</feature>
<feature type="binding site" evidence="1">
    <location>
        <begin position="153"/>
        <end position="154"/>
    </location>
    <ligand>
        <name>S-adenosyl-L-methionine</name>
        <dbReference type="ChEBI" id="CHEBI:59789"/>
    </ligand>
</feature>
<feature type="binding site" evidence="1">
    <location>
        <position position="171"/>
    </location>
    <ligand>
        <name>S-adenosyl-L-methionine</name>
        <dbReference type="ChEBI" id="CHEBI:59789"/>
    </ligand>
</feature>
<comment type="function">
    <text evidence="1">Specifically methylates the guanosine in position 1516 of 16S rRNA.</text>
</comment>
<comment type="catalytic activity">
    <reaction evidence="1">
        <text>guanosine(1516) in 16S rRNA + S-adenosyl-L-methionine = N(2)-methylguanosine(1516) in 16S rRNA + S-adenosyl-L-homocysteine + H(+)</text>
        <dbReference type="Rhea" id="RHEA:43220"/>
        <dbReference type="Rhea" id="RHEA-COMP:10412"/>
        <dbReference type="Rhea" id="RHEA-COMP:10413"/>
        <dbReference type="ChEBI" id="CHEBI:15378"/>
        <dbReference type="ChEBI" id="CHEBI:57856"/>
        <dbReference type="ChEBI" id="CHEBI:59789"/>
        <dbReference type="ChEBI" id="CHEBI:74269"/>
        <dbReference type="ChEBI" id="CHEBI:74481"/>
        <dbReference type="EC" id="2.1.1.242"/>
    </reaction>
</comment>
<comment type="subcellular location">
    <subcellularLocation>
        <location evidence="1">Cytoplasm</location>
    </subcellularLocation>
</comment>
<comment type="similarity">
    <text evidence="1">Belongs to the methyltransferase superfamily. RsmJ family.</text>
</comment>
<protein>
    <recommendedName>
        <fullName evidence="1">Ribosomal RNA small subunit methyltransferase J</fullName>
        <ecNumber evidence="1">2.1.1.242</ecNumber>
    </recommendedName>
    <alternativeName>
        <fullName evidence="1">16S rRNA m2G1516 methyltransferase</fullName>
    </alternativeName>
    <alternativeName>
        <fullName evidence="1">rRNA (guanine-N(2)-)-methyltransferase</fullName>
    </alternativeName>
</protein>